<dbReference type="EC" id="3.1.3.78" evidence="2"/>
<dbReference type="EMBL" id="BC103147">
    <property type="protein sequence ID" value="AAI03148.1"/>
    <property type="molecule type" value="mRNA"/>
</dbReference>
<dbReference type="RefSeq" id="NP_001035684.1">
    <property type="nucleotide sequence ID" value="NM_001040594.2"/>
</dbReference>
<dbReference type="SMR" id="Q3SZ48"/>
<dbReference type="FunCoup" id="Q3SZ48">
    <property type="interactions" value="2405"/>
</dbReference>
<dbReference type="STRING" id="9913.ENSBTAP00000028656"/>
<dbReference type="PaxDb" id="9913-ENSBTAP00000028656"/>
<dbReference type="Ensembl" id="ENSBTAT00000028656.7">
    <property type="protein sequence ID" value="ENSBTAP00000028656.5"/>
    <property type="gene ID" value="ENSBTAG00000039968.4"/>
</dbReference>
<dbReference type="GeneID" id="616641"/>
<dbReference type="KEGG" id="bta:616641"/>
<dbReference type="CTD" id="55529"/>
<dbReference type="VEuPathDB" id="HostDB:ENSBTAG00000039968"/>
<dbReference type="VGNC" id="VGNC:32910">
    <property type="gene designation" value="PIP4P2"/>
</dbReference>
<dbReference type="eggNOG" id="KOG4684">
    <property type="taxonomic scope" value="Eukaryota"/>
</dbReference>
<dbReference type="GeneTree" id="ENSGT00390000003680"/>
<dbReference type="HOGENOM" id="CLU_087485_0_0_1"/>
<dbReference type="InParanoid" id="Q3SZ48"/>
<dbReference type="OMA" id="ATYISWA"/>
<dbReference type="OrthoDB" id="9939933at2759"/>
<dbReference type="TreeFam" id="TF316367"/>
<dbReference type="Proteomes" id="UP000009136">
    <property type="component" value="Chromosome 14"/>
</dbReference>
<dbReference type="Bgee" id="ENSBTAG00000039968">
    <property type="expression patterns" value="Expressed in occipital lobe and 100 other cell types or tissues"/>
</dbReference>
<dbReference type="GO" id="GO:0031902">
    <property type="term" value="C:late endosome membrane"/>
    <property type="evidence" value="ECO:0000250"/>
    <property type="project" value="UniProtKB"/>
</dbReference>
<dbReference type="GO" id="GO:0005765">
    <property type="term" value="C:lysosomal membrane"/>
    <property type="evidence" value="ECO:0000318"/>
    <property type="project" value="GO_Central"/>
</dbReference>
<dbReference type="GO" id="GO:0030670">
    <property type="term" value="C:phagocytic vesicle membrane"/>
    <property type="evidence" value="ECO:0000250"/>
    <property type="project" value="UniProtKB"/>
</dbReference>
<dbReference type="GO" id="GO:0005886">
    <property type="term" value="C:plasma membrane"/>
    <property type="evidence" value="ECO:0000250"/>
    <property type="project" value="UniProtKB"/>
</dbReference>
<dbReference type="GO" id="GO:0034597">
    <property type="term" value="F:phosphatidylinositol-4,5-bisphosphate 4-phosphatase activity"/>
    <property type="evidence" value="ECO:0000318"/>
    <property type="project" value="GO_Central"/>
</dbReference>
<dbReference type="GO" id="GO:0050765">
    <property type="term" value="P:negative regulation of phagocytosis"/>
    <property type="evidence" value="ECO:0000250"/>
    <property type="project" value="UniProtKB"/>
</dbReference>
<dbReference type="GO" id="GO:0046856">
    <property type="term" value="P:phosphatidylinositol dephosphorylation"/>
    <property type="evidence" value="ECO:0000250"/>
    <property type="project" value="UniProtKB"/>
</dbReference>
<dbReference type="InterPro" id="IPR019178">
    <property type="entry name" value="PtdIns-P2-Ptase"/>
</dbReference>
<dbReference type="PANTHER" id="PTHR21014">
    <property type="entry name" value="PHOSPHATIDYLINOSITOL-4,5-BISPHOSPHATE 4-PHOSPHATASE"/>
    <property type="match status" value="1"/>
</dbReference>
<dbReference type="PANTHER" id="PTHR21014:SF5">
    <property type="entry name" value="TYPE 2 PHOSPHATIDYLINOSITOL 4,5-BISPHOSPHATE 4-PHOSPHATASE"/>
    <property type="match status" value="1"/>
</dbReference>
<dbReference type="Pfam" id="PF09788">
    <property type="entry name" value="Tmemb_55A"/>
    <property type="match status" value="1"/>
</dbReference>
<reference key="1">
    <citation type="submission" date="2005-08" db="EMBL/GenBank/DDBJ databases">
        <authorList>
            <consortium name="NIH - Mammalian Gene Collection (MGC) project"/>
        </authorList>
    </citation>
    <scope>NUCLEOTIDE SEQUENCE [LARGE SCALE MRNA]</scope>
    <source>
        <strain>Hereford</strain>
        <tissue>Heart ventricle</tissue>
    </source>
</reference>
<protein>
    <recommendedName>
        <fullName>Type 2 phosphatidylinositol 4,5-bisphosphate 4-phosphatase</fullName>
        <shortName>Type 2 PtdIns-4,5-P2 4-Ptase</shortName>
        <ecNumber evidence="2">3.1.3.78</ecNumber>
    </recommendedName>
    <alternativeName>
        <fullName>PtdIns-4,5-P2 4-Ptase II</fullName>
    </alternativeName>
    <alternativeName>
        <fullName>Transmembrane protein 55A</fullName>
    </alternativeName>
</protein>
<keyword id="KW-1003">Cell membrane</keyword>
<keyword id="KW-0968">Cytoplasmic vesicle</keyword>
<keyword id="KW-0967">Endosome</keyword>
<keyword id="KW-0378">Hydrolase</keyword>
<keyword id="KW-0443">Lipid metabolism</keyword>
<keyword id="KW-0458">Lysosome</keyword>
<keyword id="KW-0472">Membrane</keyword>
<keyword id="KW-0597">Phosphoprotein</keyword>
<keyword id="KW-1185">Reference proteome</keyword>
<keyword id="KW-0812">Transmembrane</keyword>
<keyword id="KW-1133">Transmembrane helix</keyword>
<accession>Q3SZ48</accession>
<sequence>MAADGVDERSPLLSASHSGSVTPTAPPYLQDSSPRAELPPPYTAIVSPDASGIPVINCRVCQSLINLDGKLHQHVVKCTVCNEATPIKNPPAGKKYVRCPCNCLLICKDTSRRIGCPRPNCRRIINLGPVMLVSEEQPAQPALPVQPEGTRVVCGHCGNTFLWMELRFNTLAKCPHCKKISSVGSALPRRRCCAYITIGMMCIFIGIGLTVGTQDFARRFHATYVSWAIAYLLGLVCLIRACYWGAIRVSYPEHSFA</sequence>
<comment type="function">
    <text evidence="2 3">Catalyzes the hydrolysis of phosphatidylinositol-4,5-bisphosphate (PtdIns-4,5-P2) to phosphatidylinositol-4-phosphate (PtdIns-4-P) (By similarity). Does not hydrolyze phosphatidylinositol 3,4,5-trisphosphate, phosphatidylinositol 3,4-bisphosphate, inositol 3,5-bisphosphate, inositol 3,4-bisphosphate, phosphatidylinositol 5-monophosphate, phosphatidylinositol 4-monophosphate and phosphatidylinositol 3-monophosphate (By similarity). Negatively regulates the phagocytosis of large particles by reducing phagosomal phosphatidylinositol 4,5-bisphosphate accumulation during cup formation (By similarity).</text>
</comment>
<comment type="catalytic activity">
    <reaction evidence="2">
        <text>a 1,2-diacyl-sn-glycero-3-phospho-(1D-myo-inositol-4,5-bisphosphate) + H2O = a 1,2-diacyl-sn-glycero-3-phospho-(1D-myo-inositol-5-phosphate) + phosphate</text>
        <dbReference type="Rhea" id="RHEA:25674"/>
        <dbReference type="ChEBI" id="CHEBI:15377"/>
        <dbReference type="ChEBI" id="CHEBI:43474"/>
        <dbReference type="ChEBI" id="CHEBI:57795"/>
        <dbReference type="ChEBI" id="CHEBI:58456"/>
        <dbReference type="EC" id="3.1.3.78"/>
    </reaction>
</comment>
<comment type="subcellular location">
    <subcellularLocation>
        <location evidence="2">Late endosome membrane</location>
        <topology evidence="4">Multi-pass membrane protein</topology>
    </subcellularLocation>
    <subcellularLocation>
        <location evidence="2">Lysosome membrane</location>
        <topology evidence="4">Multi-pass membrane protein</topology>
    </subcellularLocation>
    <subcellularLocation>
        <location evidence="3">Cytoplasmic vesicle</location>
        <location evidence="3">Phagosome membrane</location>
        <topology evidence="4">Multi-pass membrane protein</topology>
    </subcellularLocation>
    <subcellularLocation>
        <location evidence="3">Cell membrane</location>
        <topology evidence="4">Multi-pass membrane protein</topology>
    </subcellularLocation>
</comment>
<gene>
    <name evidence="2" type="primary">PIP4P2</name>
    <name evidence="2" type="synonym">TMEM55A</name>
</gene>
<feature type="chain" id="PRO_0000235227" description="Type 2 phosphatidylinositol 4,5-bisphosphate 4-phosphatase">
    <location>
        <begin position="1"/>
        <end position="257"/>
    </location>
</feature>
<feature type="transmembrane region" description="Helical" evidence="4">
    <location>
        <begin position="192"/>
        <end position="212"/>
    </location>
</feature>
<feature type="transmembrane region" description="Helical" evidence="4">
    <location>
        <begin position="227"/>
        <end position="247"/>
    </location>
</feature>
<feature type="region of interest" description="Disordered" evidence="5">
    <location>
        <begin position="1"/>
        <end position="34"/>
    </location>
</feature>
<feature type="short sequence motif" description="CX5R motif">
    <location>
        <begin position="107"/>
        <end position="113"/>
    </location>
</feature>
<feature type="compositionally biased region" description="Basic and acidic residues" evidence="5">
    <location>
        <begin position="1"/>
        <end position="10"/>
    </location>
</feature>
<feature type="compositionally biased region" description="Polar residues" evidence="5">
    <location>
        <begin position="13"/>
        <end position="23"/>
    </location>
</feature>
<feature type="active site" evidence="1">
    <location>
        <position position="107"/>
    </location>
</feature>
<feature type="modified residue" description="Phosphothreonine" evidence="2">
    <location>
        <position position="22"/>
    </location>
</feature>
<feature type="modified residue" description="Phosphoserine" evidence="3">
    <location>
        <position position="33"/>
    </location>
</feature>
<name>PP4P2_BOVIN</name>
<proteinExistence type="evidence at transcript level"/>
<evidence type="ECO:0000250" key="1"/>
<evidence type="ECO:0000250" key="2">
    <source>
        <dbReference type="UniProtKB" id="Q8N4L2"/>
    </source>
</evidence>
<evidence type="ECO:0000250" key="3">
    <source>
        <dbReference type="UniProtKB" id="Q9CZX7"/>
    </source>
</evidence>
<evidence type="ECO:0000255" key="4"/>
<evidence type="ECO:0000256" key="5">
    <source>
        <dbReference type="SAM" id="MobiDB-lite"/>
    </source>
</evidence>
<organism>
    <name type="scientific">Bos taurus</name>
    <name type="common">Bovine</name>
    <dbReference type="NCBI Taxonomy" id="9913"/>
    <lineage>
        <taxon>Eukaryota</taxon>
        <taxon>Metazoa</taxon>
        <taxon>Chordata</taxon>
        <taxon>Craniata</taxon>
        <taxon>Vertebrata</taxon>
        <taxon>Euteleostomi</taxon>
        <taxon>Mammalia</taxon>
        <taxon>Eutheria</taxon>
        <taxon>Laurasiatheria</taxon>
        <taxon>Artiodactyla</taxon>
        <taxon>Ruminantia</taxon>
        <taxon>Pecora</taxon>
        <taxon>Bovidae</taxon>
        <taxon>Bovinae</taxon>
        <taxon>Bos</taxon>
    </lineage>
</organism>